<dbReference type="EMBL" id="AL596168">
    <property type="protein sequence ID" value="CAC96769.1"/>
    <property type="molecule type" value="Genomic_DNA"/>
</dbReference>
<dbReference type="PIR" id="AI1624">
    <property type="entry name" value="AI1624"/>
</dbReference>
<dbReference type="SMR" id="P60356"/>
<dbReference type="STRING" id="272626.gene:17565869"/>
<dbReference type="KEGG" id="lin:lin1538"/>
<dbReference type="eggNOG" id="COG4472">
    <property type="taxonomic scope" value="Bacteria"/>
</dbReference>
<dbReference type="HOGENOM" id="CLU_162466_0_0_9"/>
<dbReference type="OrthoDB" id="9796303at2"/>
<dbReference type="Proteomes" id="UP000002513">
    <property type="component" value="Chromosome"/>
</dbReference>
<dbReference type="HAMAP" id="MF_01507">
    <property type="entry name" value="UPF0297"/>
    <property type="match status" value="1"/>
</dbReference>
<dbReference type="InterPro" id="IPR009309">
    <property type="entry name" value="IreB"/>
</dbReference>
<dbReference type="NCBIfam" id="NF003997">
    <property type="entry name" value="PRK05473.1"/>
    <property type="match status" value="1"/>
</dbReference>
<dbReference type="PANTHER" id="PTHR40067">
    <property type="entry name" value="UPF0297 PROTEIN YRZL"/>
    <property type="match status" value="1"/>
</dbReference>
<dbReference type="PANTHER" id="PTHR40067:SF1">
    <property type="entry name" value="UPF0297 PROTEIN YRZL"/>
    <property type="match status" value="1"/>
</dbReference>
<dbReference type="Pfam" id="PF06135">
    <property type="entry name" value="IreB"/>
    <property type="match status" value="1"/>
</dbReference>
<dbReference type="PIRSF" id="PIRSF037258">
    <property type="entry name" value="DUF965_bac"/>
    <property type="match status" value="1"/>
</dbReference>
<accession>P60356</accession>
<accession>Q92BL0</accession>
<reference key="1">
    <citation type="journal article" date="2001" name="Science">
        <title>Comparative genomics of Listeria species.</title>
        <authorList>
            <person name="Glaser P."/>
            <person name="Frangeul L."/>
            <person name="Buchrieser C."/>
            <person name="Rusniok C."/>
            <person name="Amend A."/>
            <person name="Baquero F."/>
            <person name="Berche P."/>
            <person name="Bloecker H."/>
            <person name="Brandt P."/>
            <person name="Chakraborty T."/>
            <person name="Charbit A."/>
            <person name="Chetouani F."/>
            <person name="Couve E."/>
            <person name="de Daruvar A."/>
            <person name="Dehoux P."/>
            <person name="Domann E."/>
            <person name="Dominguez-Bernal G."/>
            <person name="Duchaud E."/>
            <person name="Durant L."/>
            <person name="Dussurget O."/>
            <person name="Entian K.-D."/>
            <person name="Fsihi H."/>
            <person name="Garcia-del Portillo F."/>
            <person name="Garrido P."/>
            <person name="Gautier L."/>
            <person name="Goebel W."/>
            <person name="Gomez-Lopez N."/>
            <person name="Hain T."/>
            <person name="Hauf J."/>
            <person name="Jackson D."/>
            <person name="Jones L.-M."/>
            <person name="Kaerst U."/>
            <person name="Kreft J."/>
            <person name="Kuhn M."/>
            <person name="Kunst F."/>
            <person name="Kurapkat G."/>
            <person name="Madueno E."/>
            <person name="Maitournam A."/>
            <person name="Mata Vicente J."/>
            <person name="Ng E."/>
            <person name="Nedjari H."/>
            <person name="Nordsiek G."/>
            <person name="Novella S."/>
            <person name="de Pablos B."/>
            <person name="Perez-Diaz J.-C."/>
            <person name="Purcell R."/>
            <person name="Remmel B."/>
            <person name="Rose M."/>
            <person name="Schlueter T."/>
            <person name="Simoes N."/>
            <person name="Tierrez A."/>
            <person name="Vazquez-Boland J.-A."/>
            <person name="Voss H."/>
            <person name="Wehland J."/>
            <person name="Cossart P."/>
        </authorList>
    </citation>
    <scope>NUCLEOTIDE SEQUENCE [LARGE SCALE GENOMIC DNA]</scope>
    <source>
        <strain>ATCC BAA-680 / CLIP 11262</strain>
    </source>
</reference>
<evidence type="ECO:0000255" key="1">
    <source>
        <dbReference type="HAMAP-Rule" id="MF_01507"/>
    </source>
</evidence>
<gene>
    <name type="ordered locus">lin1538</name>
</gene>
<protein>
    <recommendedName>
        <fullName evidence="1">UPF0297 protein lin1538</fullName>
    </recommendedName>
</protein>
<organism>
    <name type="scientific">Listeria innocua serovar 6a (strain ATCC BAA-680 / CLIP 11262)</name>
    <dbReference type="NCBI Taxonomy" id="272626"/>
    <lineage>
        <taxon>Bacteria</taxon>
        <taxon>Bacillati</taxon>
        <taxon>Bacillota</taxon>
        <taxon>Bacilli</taxon>
        <taxon>Bacillales</taxon>
        <taxon>Listeriaceae</taxon>
        <taxon>Listeria</taxon>
    </lineage>
</organism>
<comment type="similarity">
    <text evidence="1">Belongs to the UPF0297 family.</text>
</comment>
<name>Y1538_LISIN</name>
<proteinExistence type="inferred from homology"/>
<sequence length="90" mass="10544">MDSKDQTMFYNFGDDSIEEDVKKLMKQVYVALEEKGYNPVNQIVGYLLSGDPAYIPRHKDARSMIRRLERDEIIEELVKAYLKNNEIGEK</sequence>
<feature type="chain" id="PRO_0000216973" description="UPF0297 protein lin1538">
    <location>
        <begin position="1"/>
        <end position="90"/>
    </location>
</feature>